<gene>
    <name evidence="22" type="primary">Grin2c</name>
</gene>
<organism>
    <name type="scientific">Rattus norvegicus</name>
    <name type="common">Rat</name>
    <dbReference type="NCBI Taxonomy" id="10116"/>
    <lineage>
        <taxon>Eukaryota</taxon>
        <taxon>Metazoa</taxon>
        <taxon>Chordata</taxon>
        <taxon>Craniata</taxon>
        <taxon>Vertebrata</taxon>
        <taxon>Euteleostomi</taxon>
        <taxon>Mammalia</taxon>
        <taxon>Eutheria</taxon>
        <taxon>Euarchontoglires</taxon>
        <taxon>Glires</taxon>
        <taxon>Rodentia</taxon>
        <taxon>Myomorpha</taxon>
        <taxon>Muroidea</taxon>
        <taxon>Muridae</taxon>
        <taxon>Murinae</taxon>
        <taxon>Rattus</taxon>
    </lineage>
</organism>
<sequence length="1237" mass="135271">MGGALGPALLLTSLLGAWARLGAGQGEQAVTVAVVFGSSGPLQTQARTRLTSQNFLDLPLEIQPLTVGVNNTNPSSILTQICGLLGAARVHGIVFEDNVDTEAVAQLLDFVSSQTHVPILSISGGSAVVLTPKEPGSAFLQLGVSLEQQLQVLFKVLEEYDWSAFAVITSLHPGHALFLEGVRAVADASYLSWRLLDVLTLELGPGGPRARTQRLLRQVDAPVLVAYCSREEAEVLFAEAAQAGLVGPGHVWLVPNLALGSTDAPPAAFPVGLISVVTESWRLSLRQKVRDGVAILALGAHSYRRQYGTLPAPAGDCRSHPGPVSPAREAFYRHLLNVTWEGRDFSFSPGGYLVRPTMVVIALNRHRLWEMVGRWDHGVLYMKYPVWPRYSTSLQPVVDSRHLTVATLEERPFVIVESPDPGTGGCVPNTVPCRRQSNHTFSSGDLTPYTKLCCKGFCIDILKKLAKVVKFSYDLYLVTNGKHGKRVRGVWNGMIGEVYYKRADMAIGSLTINEERSEIIDFSVPFVETGISVMVSRSNGTVSPSAFLEPYSPAVWVMMFVMCLTVVAITVFMFEYFSPVSYNQNLTKGKKPGGPSFTIGKSVWLLWALVFNNSVPIENPRGTTSKIMVLVWAFFAVIFLASYTANLAAFMIQEQYIDTVSGLSDKKFQRPQDQYPPFRFGTVPNGSTERNIRSNYRDMHTHMVKFNQRSVEDALTSLKMGKLDAFIYDAAVLNYMAGKDEGCKLVTIGSGKVFATTGYGIAMQKDSHWKRAIDLALLQLLGDGETQKLETVWLSGICQNEKNEVMSSKLDIDNMAGVFYMLLVAMGLALLVFAWEHLVYWKLRHSVPNSSQLDFLLAFSRGIYSCFNGVQSLPSPARPPSPDLTADSAQANVLKMLQAARDMVNTADVSSSLDRATRTIENWGNNRRVPAPTASGPRSSTPGPPGQPSPSGWGPPGGGRTPLARRAPQPPARPATCGPPLPDVSRPSCRHASDARWPVRVGHQGPHVSASERRALPERSLLPAHCHYSSFPRAERSGRPYLPLFPEPPEPDDLPLLGPEQLARREAMLRAAWARGPRPRHASLPSSVAEAFTRSNPLPARCTGHACACPCPQSRPSCRHLAQAQSLRLPSYPEACVEGVPAGVATWQPRQHVCLHAHTRLPFCWGTVCRHPPPCTSHSPWLIGTWEPPAHRVRTLGLGTGYRDSGVLEEVSREACGTQGFPRSCTWRRVSSLESEV</sequence>
<dbReference type="EMBL" id="M91563">
    <property type="protein sequence ID" value="AAA41713.1"/>
    <property type="molecule type" value="mRNA"/>
</dbReference>
<dbReference type="EMBL" id="D13212">
    <property type="protein sequence ID" value="BAA02499.1"/>
    <property type="status" value="ALT_INIT"/>
    <property type="molecule type" value="mRNA"/>
</dbReference>
<dbReference type="RefSeq" id="NP_036707.3">
    <property type="nucleotide sequence ID" value="NM_012575.3"/>
</dbReference>
<dbReference type="RefSeq" id="XP_006247769.1">
    <property type="nucleotide sequence ID" value="XM_006247707.2"/>
</dbReference>
<dbReference type="RefSeq" id="XP_006247771.1">
    <property type="nucleotide sequence ID" value="XM_006247709.5"/>
</dbReference>
<dbReference type="RefSeq" id="XP_017452475.1">
    <property type="nucleotide sequence ID" value="XM_017596986.1"/>
</dbReference>
<dbReference type="RefSeq" id="XP_017452476.1">
    <property type="nucleotide sequence ID" value="XM_017596987.1"/>
</dbReference>
<dbReference type="RefSeq" id="XP_017452477.1">
    <property type="nucleotide sequence ID" value="XM_017596988.1"/>
</dbReference>
<dbReference type="RefSeq" id="XP_017452478.1">
    <property type="nucleotide sequence ID" value="XM_017596989.1"/>
</dbReference>
<dbReference type="RefSeq" id="XP_017452479.1">
    <property type="nucleotide sequence ID" value="XM_017596990.1"/>
</dbReference>
<dbReference type="RefSeq" id="XP_017452480.1">
    <property type="nucleotide sequence ID" value="XM_017596991.1"/>
</dbReference>
<dbReference type="RefSeq" id="XP_017452481.1">
    <property type="nucleotide sequence ID" value="XM_017596992.3"/>
</dbReference>
<dbReference type="RefSeq" id="XP_038941112.1">
    <property type="nucleotide sequence ID" value="XM_039085184.2"/>
</dbReference>
<dbReference type="RefSeq" id="XP_063124465.1">
    <property type="nucleotide sequence ID" value="XM_063268395.1"/>
</dbReference>
<dbReference type="RefSeq" id="XP_063124466.1">
    <property type="nucleotide sequence ID" value="XM_063268396.1"/>
</dbReference>
<dbReference type="PDB" id="7YFG">
    <property type="method" value="EM"/>
    <property type="resolution" value="3.60 A"/>
    <property type="chains" value="B/D=1-800"/>
</dbReference>
<dbReference type="PDB" id="7YFH">
    <property type="method" value="EM"/>
    <property type="resolution" value="3.00 A"/>
    <property type="chains" value="B/D=1-800"/>
</dbReference>
<dbReference type="PDB" id="7YFI">
    <property type="method" value="EM"/>
    <property type="resolution" value="3.30 A"/>
    <property type="chains" value="D=1-835"/>
</dbReference>
<dbReference type="PDB" id="8HDK">
    <property type="method" value="EM"/>
    <property type="resolution" value="4.30 A"/>
    <property type="chains" value="B/D=1-800"/>
</dbReference>
<dbReference type="PDBsum" id="7YFG"/>
<dbReference type="PDBsum" id="7YFH"/>
<dbReference type="PDBsum" id="7YFI"/>
<dbReference type="PDBsum" id="8HDK"/>
<dbReference type="EMDB" id="EMD-23017"/>
<dbReference type="EMDB" id="EMD-33789"/>
<dbReference type="EMDB" id="EMD-33790"/>
<dbReference type="EMDB" id="EMD-33791"/>
<dbReference type="EMDB" id="EMD-34674"/>
<dbReference type="SMR" id="Q00961"/>
<dbReference type="BioGRID" id="246576">
    <property type="interactions" value="6"/>
</dbReference>
<dbReference type="ComplexPortal" id="CPX-287">
    <property type="entry name" value="NMDA receptor complex, GluN1-GluN2C"/>
</dbReference>
<dbReference type="FunCoup" id="Q00961">
    <property type="interactions" value="392"/>
</dbReference>
<dbReference type="IntAct" id="Q00961">
    <property type="interactions" value="5"/>
</dbReference>
<dbReference type="MINT" id="Q00961"/>
<dbReference type="STRING" id="10116.ENSRNOP00000004477"/>
<dbReference type="BindingDB" id="Q00961"/>
<dbReference type="ChEMBL" id="CHEMBL401"/>
<dbReference type="DrugCentral" id="Q00961"/>
<dbReference type="GuidetoPHARMACOLOGY" id="458"/>
<dbReference type="GlyCosmos" id="Q00961">
    <property type="glycosylation" value="6 sites, No reported glycans"/>
</dbReference>
<dbReference type="GlyGen" id="Q00961">
    <property type="glycosylation" value="8 sites"/>
</dbReference>
<dbReference type="iPTMnet" id="Q00961"/>
<dbReference type="PhosphoSitePlus" id="Q00961"/>
<dbReference type="PaxDb" id="10116-ENSRNOP00000004477"/>
<dbReference type="ABCD" id="Q00961">
    <property type="antibodies" value="3 sequenced antibodies"/>
</dbReference>
<dbReference type="GeneID" id="24411"/>
<dbReference type="KEGG" id="rno:24411"/>
<dbReference type="AGR" id="RGD:2739"/>
<dbReference type="CTD" id="2905"/>
<dbReference type="RGD" id="2739">
    <property type="gene designation" value="Grin2c"/>
</dbReference>
<dbReference type="eggNOG" id="KOG1053">
    <property type="taxonomic scope" value="Eukaryota"/>
</dbReference>
<dbReference type="InParanoid" id="Q00961"/>
<dbReference type="OrthoDB" id="66127at9989"/>
<dbReference type="PhylomeDB" id="Q00961"/>
<dbReference type="TreeFam" id="TF314731"/>
<dbReference type="Reactome" id="R-RNO-438066">
    <property type="pathway name" value="Unblocking of NMDA receptors, glutamate binding and activation"/>
</dbReference>
<dbReference type="Reactome" id="R-RNO-8849932">
    <property type="pathway name" value="Synaptic adhesion-like molecules"/>
</dbReference>
<dbReference type="Reactome" id="R-RNO-9609736">
    <property type="pathway name" value="Assembly and cell surface presentation of NMDA receptors"/>
</dbReference>
<dbReference type="PRO" id="PR:Q00961"/>
<dbReference type="Proteomes" id="UP000002494">
    <property type="component" value="Unplaced"/>
</dbReference>
<dbReference type="GO" id="GO:0005789">
    <property type="term" value="C:endoplasmic reticulum membrane"/>
    <property type="evidence" value="ECO:0000304"/>
    <property type="project" value="Reactome"/>
</dbReference>
<dbReference type="GO" id="GO:0098978">
    <property type="term" value="C:glutamatergic synapse"/>
    <property type="evidence" value="ECO:0000266"/>
    <property type="project" value="RGD"/>
</dbReference>
<dbReference type="GO" id="GO:0017146">
    <property type="term" value="C:NMDA selective glutamate receptor complex"/>
    <property type="evidence" value="ECO:0000314"/>
    <property type="project" value="UniProtKB"/>
</dbReference>
<dbReference type="GO" id="GO:0005886">
    <property type="term" value="C:plasma membrane"/>
    <property type="evidence" value="ECO:0000266"/>
    <property type="project" value="RGD"/>
</dbReference>
<dbReference type="GO" id="GO:0098839">
    <property type="term" value="C:postsynaptic density membrane"/>
    <property type="evidence" value="ECO:0000266"/>
    <property type="project" value="RGD"/>
</dbReference>
<dbReference type="GO" id="GO:0045211">
    <property type="term" value="C:postsynaptic membrane"/>
    <property type="evidence" value="ECO:0000314"/>
    <property type="project" value="UniProtKB"/>
</dbReference>
<dbReference type="GO" id="GO:0016595">
    <property type="term" value="F:glutamate binding"/>
    <property type="evidence" value="ECO:0000314"/>
    <property type="project" value="UniProtKB"/>
</dbReference>
<dbReference type="GO" id="GO:0004970">
    <property type="term" value="F:glutamate-gated receptor activity"/>
    <property type="evidence" value="ECO:0000314"/>
    <property type="project" value="RGD"/>
</dbReference>
<dbReference type="GO" id="GO:0005261">
    <property type="term" value="F:monoatomic cation channel activity"/>
    <property type="evidence" value="ECO:0000314"/>
    <property type="project" value="RGD"/>
</dbReference>
<dbReference type="GO" id="GO:0004972">
    <property type="term" value="F:NMDA glutamate receptor activity"/>
    <property type="evidence" value="ECO:0000314"/>
    <property type="project" value="UniProtKB"/>
</dbReference>
<dbReference type="GO" id="GO:0030165">
    <property type="term" value="F:PDZ domain binding"/>
    <property type="evidence" value="ECO:0000353"/>
    <property type="project" value="RGD"/>
</dbReference>
<dbReference type="GO" id="GO:1904315">
    <property type="term" value="F:transmitter-gated monoatomic ion channel activity involved in regulation of postsynaptic membrane potential"/>
    <property type="evidence" value="ECO:0000266"/>
    <property type="project" value="RGD"/>
</dbReference>
<dbReference type="GO" id="GO:0097553">
    <property type="term" value="P:calcium ion transmembrane import into cytosol"/>
    <property type="evidence" value="ECO:0000250"/>
    <property type="project" value="UniProtKB"/>
</dbReference>
<dbReference type="GO" id="GO:0033058">
    <property type="term" value="P:directional locomotion"/>
    <property type="evidence" value="ECO:0000266"/>
    <property type="project" value="RGD"/>
</dbReference>
<dbReference type="GO" id="GO:0060079">
    <property type="term" value="P:excitatory postsynaptic potential"/>
    <property type="evidence" value="ECO:0000266"/>
    <property type="project" value="RGD"/>
</dbReference>
<dbReference type="GO" id="GO:0035235">
    <property type="term" value="P:ionotropic glutamate receptor signaling pathway"/>
    <property type="evidence" value="ECO:0000314"/>
    <property type="project" value="ComplexPortal"/>
</dbReference>
<dbReference type="GO" id="GO:0060291">
    <property type="term" value="P:long-term synaptic potentiation"/>
    <property type="evidence" value="ECO:0000318"/>
    <property type="project" value="GO_Central"/>
</dbReference>
<dbReference type="GO" id="GO:0098655">
    <property type="term" value="P:monoatomic cation transmembrane transport"/>
    <property type="evidence" value="ECO:0000266"/>
    <property type="project" value="RGD"/>
</dbReference>
<dbReference type="GO" id="GO:0042177">
    <property type="term" value="P:negative regulation of protein catabolic process"/>
    <property type="evidence" value="ECO:0000266"/>
    <property type="project" value="RGD"/>
</dbReference>
<dbReference type="GO" id="GO:0050885">
    <property type="term" value="P:neuromuscular process controlling balance"/>
    <property type="evidence" value="ECO:0000266"/>
    <property type="project" value="RGD"/>
</dbReference>
<dbReference type="GO" id="GO:2000463">
    <property type="term" value="P:positive regulation of excitatory postsynaptic potential"/>
    <property type="evidence" value="ECO:0000314"/>
    <property type="project" value="ComplexPortal"/>
</dbReference>
<dbReference type="GO" id="GO:0051968">
    <property type="term" value="P:positive regulation of synaptic transmission, glutamatergic"/>
    <property type="evidence" value="ECO:0000314"/>
    <property type="project" value="ComplexPortal"/>
</dbReference>
<dbReference type="GO" id="GO:1903539">
    <property type="term" value="P:protein localization to postsynaptic membrane"/>
    <property type="evidence" value="ECO:0000266"/>
    <property type="project" value="RGD"/>
</dbReference>
<dbReference type="GO" id="GO:0042391">
    <property type="term" value="P:regulation of membrane potential"/>
    <property type="evidence" value="ECO:0000266"/>
    <property type="project" value="RGD"/>
</dbReference>
<dbReference type="GO" id="GO:1904062">
    <property type="term" value="P:regulation of monoatomic cation transmembrane transport"/>
    <property type="evidence" value="ECO:0000314"/>
    <property type="project" value="ComplexPortal"/>
</dbReference>
<dbReference type="GO" id="GO:0048168">
    <property type="term" value="P:regulation of neuronal synaptic plasticity"/>
    <property type="evidence" value="ECO:0000303"/>
    <property type="project" value="ComplexPortal"/>
</dbReference>
<dbReference type="GO" id="GO:0048167">
    <property type="term" value="P:regulation of synaptic plasticity"/>
    <property type="evidence" value="ECO:0000266"/>
    <property type="project" value="RGD"/>
</dbReference>
<dbReference type="GO" id="GO:0009611">
    <property type="term" value="P:response to wounding"/>
    <property type="evidence" value="ECO:0000266"/>
    <property type="project" value="RGD"/>
</dbReference>
<dbReference type="GO" id="GO:0035249">
    <property type="term" value="P:synaptic transmission, glutamatergic"/>
    <property type="evidence" value="ECO:0000318"/>
    <property type="project" value="GO_Central"/>
</dbReference>
<dbReference type="CDD" id="cd06378">
    <property type="entry name" value="PBP1_iGluR_NMDA_NR2"/>
    <property type="match status" value="1"/>
</dbReference>
<dbReference type="CDD" id="cd13718">
    <property type="entry name" value="PBP2_iGluR_NMDA_Nr2"/>
    <property type="match status" value="1"/>
</dbReference>
<dbReference type="FunFam" id="3.40.190.10:FF:000026">
    <property type="entry name" value="Glutamate ionotropic receptor NMDA type subunit 2A"/>
    <property type="match status" value="1"/>
</dbReference>
<dbReference type="FunFam" id="3.40.50.2300:FF:000020">
    <property type="entry name" value="Glutamate receptor ionotropic, NMDA 2B, putative"/>
    <property type="match status" value="1"/>
</dbReference>
<dbReference type="FunFam" id="3.40.190.10:FF:000007">
    <property type="entry name" value="Putative glutamate receptor ionotropic NMDA 2B"/>
    <property type="match status" value="1"/>
</dbReference>
<dbReference type="Gene3D" id="3.40.50.2300">
    <property type="match status" value="2"/>
</dbReference>
<dbReference type="Gene3D" id="3.40.190.10">
    <property type="entry name" value="Periplasmic binding protein-like II"/>
    <property type="match status" value="2"/>
</dbReference>
<dbReference type="InterPro" id="IPR001828">
    <property type="entry name" value="ANF_lig-bd_rcpt"/>
</dbReference>
<dbReference type="InterPro" id="IPR019594">
    <property type="entry name" value="Glu/Gly-bd"/>
</dbReference>
<dbReference type="InterPro" id="IPR001508">
    <property type="entry name" value="Iono_Glu_rcpt_met"/>
</dbReference>
<dbReference type="InterPro" id="IPR015683">
    <property type="entry name" value="Ionotropic_Glu_rcpt"/>
</dbReference>
<dbReference type="InterPro" id="IPR001320">
    <property type="entry name" value="Iontro_rcpt_C"/>
</dbReference>
<dbReference type="InterPro" id="IPR018884">
    <property type="entry name" value="NMDAR2_C"/>
</dbReference>
<dbReference type="InterPro" id="IPR028082">
    <property type="entry name" value="Peripla_BP_I"/>
</dbReference>
<dbReference type="PANTHER" id="PTHR18966">
    <property type="entry name" value="IONOTROPIC GLUTAMATE RECEPTOR"/>
    <property type="match status" value="1"/>
</dbReference>
<dbReference type="Pfam" id="PF01094">
    <property type="entry name" value="ANF_receptor"/>
    <property type="match status" value="1"/>
</dbReference>
<dbReference type="Pfam" id="PF00060">
    <property type="entry name" value="Lig_chan"/>
    <property type="match status" value="1"/>
</dbReference>
<dbReference type="Pfam" id="PF10613">
    <property type="entry name" value="Lig_chan-Glu_bd"/>
    <property type="match status" value="1"/>
</dbReference>
<dbReference type="Pfam" id="PF10565">
    <property type="entry name" value="NMDAR2_C"/>
    <property type="match status" value="1"/>
</dbReference>
<dbReference type="PRINTS" id="PR00177">
    <property type="entry name" value="NMDARECEPTOR"/>
</dbReference>
<dbReference type="SMART" id="SM00918">
    <property type="entry name" value="Lig_chan-Glu_bd"/>
    <property type="match status" value="1"/>
</dbReference>
<dbReference type="SMART" id="SM00079">
    <property type="entry name" value="PBPe"/>
    <property type="match status" value="1"/>
</dbReference>
<dbReference type="SUPFAM" id="SSF53822">
    <property type="entry name" value="Periplasmic binding protein-like I"/>
    <property type="match status" value="1"/>
</dbReference>
<dbReference type="SUPFAM" id="SSF53850">
    <property type="entry name" value="Periplasmic binding protein-like II"/>
    <property type="match status" value="1"/>
</dbReference>
<proteinExistence type="evidence at protein level"/>
<protein>
    <recommendedName>
        <fullName evidence="19">Glutamate receptor ionotropic, NMDA 2C</fullName>
        <shortName evidence="17">GluN2C</shortName>
    </recommendedName>
    <alternativeName>
        <fullName evidence="4">Glutamate [NMDA] receptor subunit epsilon-3</fullName>
    </alternativeName>
    <alternativeName>
        <fullName>N-methyl D-aspartate receptor subtype 2C</fullName>
        <shortName evidence="18">NMDAR2C</shortName>
        <shortName evidence="16">NR2C</shortName>
    </alternativeName>
</protein>
<keyword id="KW-0002">3D-structure</keyword>
<keyword id="KW-0106">Calcium</keyword>
<keyword id="KW-1003">Cell membrane</keyword>
<keyword id="KW-1015">Disulfide bond</keyword>
<keyword id="KW-0325">Glycoprotein</keyword>
<keyword id="KW-0407">Ion channel</keyword>
<keyword id="KW-0406">Ion transport</keyword>
<keyword id="KW-1071">Ligand-gated ion channel</keyword>
<keyword id="KW-0460">Magnesium</keyword>
<keyword id="KW-0472">Membrane</keyword>
<keyword id="KW-0597">Phosphoprotein</keyword>
<keyword id="KW-0628">Postsynaptic cell membrane</keyword>
<keyword id="KW-0675">Receptor</keyword>
<keyword id="KW-1185">Reference proteome</keyword>
<keyword id="KW-0732">Signal</keyword>
<keyword id="KW-0770">Synapse</keyword>
<keyword id="KW-0812">Transmembrane</keyword>
<keyword id="KW-1133">Transmembrane helix</keyword>
<keyword id="KW-0813">Transport</keyword>
<name>NMDE3_RAT</name>
<feature type="signal peptide" evidence="6">
    <location>
        <begin position="1"/>
        <end position="19"/>
    </location>
</feature>
<feature type="chain" id="PRO_0000011582" description="Glutamate receptor ionotropic, NMDA 2C">
    <location>
        <begin position="20"/>
        <end position="1237"/>
    </location>
</feature>
<feature type="topological domain" description="Extracellular" evidence="5">
    <location>
        <begin position="20"/>
        <end position="554"/>
    </location>
</feature>
<feature type="transmembrane region" description="Helical" evidence="5">
    <location>
        <begin position="555"/>
        <end position="575"/>
    </location>
</feature>
<feature type="topological domain" description="Cytoplasmic" evidence="5">
    <location>
        <begin position="576"/>
        <end position="601"/>
    </location>
</feature>
<feature type="intramembrane region" description="Discontinuously helical" evidence="11 25">
    <location>
        <begin position="602"/>
        <end position="611"/>
    </location>
</feature>
<feature type="topological domain" description="Cytoplasmic" evidence="20">
    <location>
        <begin position="612"/>
        <end position="622"/>
    </location>
</feature>
<feature type="transmembrane region" description="Helical" evidence="11 25">
    <location>
        <begin position="623"/>
        <end position="644"/>
    </location>
</feature>
<feature type="topological domain" description="Extracellular" evidence="20">
    <location>
        <begin position="645"/>
        <end position="813"/>
    </location>
</feature>
<feature type="transmembrane region" description="Helical" evidence="11 25">
    <location>
        <begin position="814"/>
        <end position="833"/>
    </location>
</feature>
<feature type="topological domain" description="Cytoplasmic" evidence="20">
    <location>
        <begin position="834"/>
        <end position="1237"/>
    </location>
</feature>
<feature type="region of interest" description="Pore-forming" evidence="3">
    <location>
        <begin position="601"/>
        <end position="620"/>
    </location>
</feature>
<feature type="region of interest" description="Disordered" evidence="7">
    <location>
        <begin position="907"/>
        <end position="990"/>
    </location>
</feature>
<feature type="short sequence motif" description="PDZ-binding">
    <location>
        <begin position="1235"/>
        <end position="1237"/>
    </location>
</feature>
<feature type="compositionally biased region" description="Polar residues" evidence="7">
    <location>
        <begin position="907"/>
        <end position="925"/>
    </location>
</feature>
<feature type="compositionally biased region" description="Low complexity" evidence="7">
    <location>
        <begin position="930"/>
        <end position="941"/>
    </location>
</feature>
<feature type="compositionally biased region" description="Pro residues" evidence="7">
    <location>
        <begin position="968"/>
        <end position="982"/>
    </location>
</feature>
<feature type="binding site" evidence="11 21">
    <location>
        <position position="509"/>
    </location>
    <ligand>
        <name>L-glutamate</name>
        <dbReference type="ChEBI" id="CHEBI:29985"/>
    </ligand>
</feature>
<feature type="binding site" evidence="11 21">
    <location>
        <position position="511"/>
    </location>
    <ligand>
        <name>L-glutamate</name>
        <dbReference type="ChEBI" id="CHEBI:29985"/>
    </ligand>
</feature>
<feature type="binding site" evidence="11 21">
    <location>
        <position position="516"/>
    </location>
    <ligand>
        <name>L-glutamate</name>
        <dbReference type="ChEBI" id="CHEBI:29985"/>
    </ligand>
</feature>
<feature type="binding site" evidence="11 21">
    <location>
        <position position="687"/>
    </location>
    <ligand>
        <name>L-glutamate</name>
        <dbReference type="ChEBI" id="CHEBI:29985"/>
    </ligand>
</feature>
<feature type="binding site" evidence="11 21">
    <location>
        <position position="688"/>
    </location>
    <ligand>
        <name>L-glutamate</name>
        <dbReference type="ChEBI" id="CHEBI:29985"/>
    </ligand>
</feature>
<feature type="binding site" evidence="3">
    <location>
        <position position="729"/>
    </location>
    <ligand>
        <name>L-glutamate</name>
        <dbReference type="ChEBI" id="CHEBI:29985"/>
    </ligand>
</feature>
<feature type="site" description="Functional determinant of NMDA receptors" evidence="1">
    <location>
        <position position="612"/>
    </location>
</feature>
<feature type="modified residue" description="Phosphoserine" evidence="4">
    <location>
        <position position="875"/>
    </location>
</feature>
<feature type="modified residue" description="Phosphoserine" evidence="4">
    <location>
        <position position="881"/>
    </location>
</feature>
<feature type="modified residue" description="Phosphoserine" evidence="27">
    <location>
        <position position="912"/>
    </location>
</feature>
<feature type="glycosylation site" description="N-linked (GlcNAc...) asparagine" evidence="6">
    <location>
        <position position="70"/>
    </location>
</feature>
<feature type="glycosylation site" description="N-linked (GlcNAc...) asparagine" evidence="6">
    <location>
        <position position="73"/>
    </location>
</feature>
<feature type="glycosylation site" description="N-linked (GlcNAc...) asparagine" evidence="6">
    <location>
        <position position="337"/>
    </location>
</feature>
<feature type="glycosylation site" description="N-linked (GlcNAc...) asparagine" evidence="6">
    <location>
        <position position="438"/>
    </location>
</feature>
<feature type="glycosylation site" description="N-linked (GlcNAc...) asparagine" evidence="6">
    <location>
        <position position="539"/>
    </location>
</feature>
<feature type="glycosylation site" description="N-linked (GlcNAc...) asparagine" evidence="6">
    <location>
        <position position="685"/>
    </location>
</feature>
<feature type="disulfide bond" evidence="11 23 24 25 26">
    <location>
        <begin position="82"/>
        <end position="317"/>
    </location>
</feature>
<feature type="disulfide bond" evidence="11 23 24 25 26">
    <location>
        <begin position="426"/>
        <end position="453"/>
    </location>
</feature>
<feature type="disulfide bond" evidence="11 23 24 25 26">
    <location>
        <begin position="433"/>
        <end position="454"/>
    </location>
</feature>
<feature type="disulfide bond" evidence="11 23 24 26">
    <location>
        <begin position="743"/>
        <end position="798"/>
    </location>
</feature>
<feature type="mutagenesis site" description="Changed NMDA glutamate receptor activity characterized by increased glutamate and glycine potency." evidence="9">
    <original>P</original>
    <variation>R</variation>
    <location>
        <position position="550"/>
    </location>
</feature>
<feature type="mutagenesis site" description="Increased NMDA glutamate receptor activity characterized by increased glutamate and glycine potency." evidence="10">
    <original>M</original>
    <variation>V</variation>
    <location>
        <position position="815"/>
    </location>
</feature>
<feature type="strand" evidence="28">
    <location>
        <begin position="31"/>
        <end position="35"/>
    </location>
</feature>
<feature type="strand" evidence="29">
    <location>
        <begin position="38"/>
        <end position="40"/>
    </location>
</feature>
<feature type="helix" evidence="28">
    <location>
        <begin position="44"/>
        <end position="49"/>
    </location>
</feature>
<feature type="helix" evidence="28">
    <location>
        <begin position="50"/>
        <end position="54"/>
    </location>
</feature>
<feature type="strand" evidence="28">
    <location>
        <begin position="58"/>
        <end position="60"/>
    </location>
</feature>
<feature type="strand" evidence="28">
    <location>
        <begin position="63"/>
        <end position="67"/>
    </location>
</feature>
<feature type="helix" evidence="28">
    <location>
        <begin position="74"/>
        <end position="87"/>
    </location>
</feature>
<feature type="strand" evidence="28">
    <location>
        <begin position="91"/>
        <end position="95"/>
    </location>
</feature>
<feature type="helix" evidence="28">
    <location>
        <begin position="104"/>
        <end position="115"/>
    </location>
</feature>
<feature type="strand" evidence="28">
    <location>
        <begin position="119"/>
        <end position="121"/>
    </location>
</feature>
<feature type="strand" evidence="28">
    <location>
        <begin position="123"/>
        <end position="125"/>
    </location>
</feature>
<feature type="strand" evidence="28">
    <location>
        <begin position="141"/>
        <end position="143"/>
    </location>
</feature>
<feature type="helix" evidence="28">
    <location>
        <begin position="146"/>
        <end position="160"/>
    </location>
</feature>
<feature type="strand" evidence="28">
    <location>
        <begin position="164"/>
        <end position="169"/>
    </location>
</feature>
<feature type="helix" evidence="28">
    <location>
        <begin position="175"/>
        <end position="187"/>
    </location>
</feature>
<feature type="strand" evidence="28">
    <location>
        <begin position="189"/>
        <end position="191"/>
    </location>
</feature>
<feature type="strand" evidence="28">
    <location>
        <begin position="194"/>
        <end position="200"/>
    </location>
</feature>
<feature type="strand" evidence="28">
    <location>
        <begin position="204"/>
        <end position="206"/>
    </location>
</feature>
<feature type="helix" evidence="28">
    <location>
        <begin position="212"/>
        <end position="216"/>
    </location>
</feature>
<feature type="strand" evidence="28">
    <location>
        <begin position="222"/>
        <end position="227"/>
    </location>
</feature>
<feature type="helix" evidence="28">
    <location>
        <begin position="230"/>
        <end position="242"/>
    </location>
</feature>
<feature type="strand" evidence="28">
    <location>
        <begin position="251"/>
        <end position="253"/>
    </location>
</feature>
<feature type="turn" evidence="28">
    <location>
        <begin position="256"/>
        <end position="258"/>
    </location>
</feature>
<feature type="strand" evidence="29">
    <location>
        <begin position="262"/>
        <end position="264"/>
    </location>
</feature>
<feature type="strand" evidence="28">
    <location>
        <begin position="267"/>
        <end position="269"/>
    </location>
</feature>
<feature type="strand" evidence="28">
    <location>
        <begin position="274"/>
        <end position="278"/>
    </location>
</feature>
<feature type="helix" evidence="28">
    <location>
        <begin position="279"/>
        <end position="281"/>
    </location>
</feature>
<feature type="helix" evidence="28">
    <location>
        <begin position="285"/>
        <end position="307"/>
    </location>
</feature>
<feature type="strand" evidence="28">
    <location>
        <begin position="317"/>
        <end position="319"/>
    </location>
</feature>
<feature type="helix" evidence="28">
    <location>
        <begin position="326"/>
        <end position="336"/>
    </location>
</feature>
<feature type="strand" evidence="28">
    <location>
        <begin position="341"/>
        <end position="344"/>
    </location>
</feature>
<feature type="strand" evidence="28">
    <location>
        <begin position="351"/>
        <end position="355"/>
    </location>
</feature>
<feature type="strand" evidence="28">
    <location>
        <begin position="358"/>
        <end position="363"/>
    </location>
</feature>
<feature type="strand" evidence="28">
    <location>
        <begin position="369"/>
        <end position="376"/>
    </location>
</feature>
<feature type="strand" evidence="28">
    <location>
        <begin position="379"/>
        <end position="383"/>
    </location>
</feature>
<feature type="strand" evidence="28">
    <location>
        <begin position="395"/>
        <end position="397"/>
    </location>
</feature>
<feature type="strand" evidence="28">
    <location>
        <begin position="402"/>
        <end position="407"/>
    </location>
</feature>
<feature type="turn" evidence="28">
    <location>
        <begin position="411"/>
        <end position="413"/>
    </location>
</feature>
<feature type="strand" evidence="28">
    <location>
        <begin position="414"/>
        <end position="417"/>
    </location>
</feature>
<feature type="turn" evidence="28">
    <location>
        <begin position="421"/>
        <end position="423"/>
    </location>
</feature>
<feature type="strand" evidence="28">
    <location>
        <begin position="431"/>
        <end position="435"/>
    </location>
</feature>
<feature type="turn" evidence="28">
    <location>
        <begin position="437"/>
        <end position="441"/>
    </location>
</feature>
<feature type="strand" evidence="28">
    <location>
        <begin position="450"/>
        <end position="456"/>
    </location>
</feature>
<feature type="helix" evidence="28">
    <location>
        <begin position="457"/>
        <end position="469"/>
    </location>
</feature>
<feature type="strand" evidence="28">
    <location>
        <begin position="472"/>
        <end position="477"/>
    </location>
</feature>
<feature type="strand" evidence="29">
    <location>
        <begin position="480"/>
        <end position="483"/>
    </location>
</feature>
<feature type="strand" evidence="29">
    <location>
        <begin position="485"/>
        <end position="487"/>
    </location>
</feature>
<feature type="helix" evidence="28">
    <location>
        <begin position="493"/>
        <end position="499"/>
    </location>
</feature>
<feature type="strand" evidence="28">
    <location>
        <begin position="504"/>
        <end position="506"/>
    </location>
</feature>
<feature type="helix" evidence="28">
    <location>
        <begin position="514"/>
        <end position="517"/>
    </location>
</feature>
<feature type="strand" evidence="29">
    <location>
        <begin position="520"/>
        <end position="522"/>
    </location>
</feature>
<feature type="strand" evidence="28">
    <location>
        <begin position="527"/>
        <end position="536"/>
    </location>
</feature>
<feature type="helix" evidence="29">
    <location>
        <begin position="602"/>
        <end position="610"/>
    </location>
</feature>
<feature type="helix" evidence="29">
    <location>
        <begin position="623"/>
        <end position="652"/>
    </location>
</feature>
<feature type="helix" evidence="28">
    <location>
        <begin position="666"/>
        <end position="669"/>
    </location>
</feature>
<feature type="strand" evidence="28">
    <location>
        <begin position="672"/>
        <end position="676"/>
    </location>
</feature>
<feature type="strand" evidence="28">
    <location>
        <begin position="680"/>
        <end position="682"/>
    </location>
</feature>
<feature type="strand" evidence="29">
    <location>
        <begin position="684"/>
        <end position="686"/>
    </location>
</feature>
<feature type="helix" evidence="28">
    <location>
        <begin position="688"/>
        <end position="695"/>
    </location>
</feature>
<feature type="helix" evidence="28">
    <location>
        <begin position="697"/>
        <end position="705"/>
    </location>
</feature>
<feature type="helix" evidence="28">
    <location>
        <begin position="711"/>
        <end position="720"/>
    </location>
</feature>
<feature type="strand" evidence="28">
    <location>
        <begin position="724"/>
        <end position="729"/>
    </location>
</feature>
<feature type="helix" evidence="28">
    <location>
        <begin position="730"/>
        <end position="738"/>
    </location>
</feature>
<feature type="strand" evidence="28">
    <location>
        <begin position="742"/>
        <end position="747"/>
    </location>
</feature>
<feature type="turn" evidence="28">
    <location>
        <begin position="748"/>
        <end position="750"/>
    </location>
</feature>
<feature type="strand" evidence="28">
    <location>
        <begin position="754"/>
        <end position="759"/>
    </location>
</feature>
<feature type="helix" evidence="28">
    <location>
        <begin position="769"/>
        <end position="782"/>
    </location>
</feature>
<feature type="helix" evidence="28">
    <location>
        <begin position="785"/>
        <end position="793"/>
    </location>
</feature>
<feature type="strand" evidence="29">
    <location>
        <begin position="797"/>
        <end position="800"/>
    </location>
</feature>
<feature type="helix" evidence="29">
    <location>
        <begin position="812"/>
        <end position="834"/>
    </location>
</feature>
<reference key="1">
    <citation type="journal article" date="1992" name="Science">
        <title>Heteromeric NMDA receptors: molecular and functional distinction of subtypes.</title>
        <authorList>
            <person name="Monyer H."/>
            <person name="Sprengel R."/>
            <person name="Schoepfer R."/>
            <person name="Herb A."/>
            <person name="Higuchi M."/>
            <person name="Lomeli H."/>
            <person name="Burnashev N."/>
            <person name="Sakmann B."/>
            <person name="Seeburg P.H."/>
        </authorList>
    </citation>
    <scope>NUCLEOTIDE SEQUENCE [MRNA]</scope>
    <scope>FUNCTION</scope>
    <scope>TRANSPORTER ACTIVITY</scope>
    <scope>SUBCELLULAR LOCATION</scope>
    <scope>SUBUNIT</scope>
    <scope>TISSUE SPECIFICITY</scope>
    <source>
        <tissue>Brain</tissue>
    </source>
</reference>
<reference key="2">
    <citation type="journal article" date="1993" name="J. Biol. Chem.">
        <title>Molecular characterization of the family of the N-methyl-D-aspartate receptor subunits.</title>
        <authorList>
            <person name="Ishii T."/>
            <person name="Moriyoshi K."/>
            <person name="Sugihara H."/>
            <person name="Sakurada K."/>
            <person name="Kadotani H."/>
            <person name="Yokoi M."/>
            <person name="Akazawa C."/>
            <person name="Shigemoto R."/>
            <person name="Mizuno N."/>
            <person name="Masu M."/>
            <person name="Nakanishi S."/>
        </authorList>
    </citation>
    <scope>NUCLEOTIDE SEQUENCE [MRNA]</scope>
    <scope>FUNCTION</scope>
    <scope>TRANSPORTER ACTIVITY</scope>
    <scope>SUBUNIT</scope>
    <scope>SUBCELLULAR LOCATION</scope>
    <scope>TISSUE SPECIFICITY</scope>
</reference>
<reference key="3">
    <citation type="journal article" date="1995" name="Science">
        <title>Domain interaction between NMDA receptor subunits and the postsynaptic density protein PSD-95.</title>
        <authorList>
            <person name="Kornau H.C."/>
            <person name="Schenker L.T."/>
            <person name="Kennedy M.B."/>
            <person name="Seeburg P.H."/>
        </authorList>
    </citation>
    <scope>INTERACTION WITH DLG4</scope>
</reference>
<reference key="4">
    <citation type="journal article" date="1998" name="J. Neurophysiol.">
        <title>Functional and pharmacological differences between recombinant N-methyl-D-aspartate receptors.</title>
        <authorList>
            <person name="Vicini S."/>
            <person name="Wang J.F."/>
            <person name="Li J.H."/>
            <person name="Zhu W.J."/>
            <person name="Wang Y.H."/>
            <person name="Luo J.H."/>
            <person name="Wolfe B.B."/>
            <person name="Grayson D.R."/>
        </authorList>
    </citation>
    <scope>FUNCTION</scope>
</reference>
<reference key="5">
    <citation type="journal article" date="1998" name="Mol. Cell. Neurosci.">
        <title>CIPP, a novel multivalent PDZ domain protein, selectively interacts with Kir4.0 family members, NMDA receptor subunits, neurexins, and neuroligins.</title>
        <authorList>
            <person name="Kurschner C."/>
            <person name="Mermelstein P.G."/>
            <person name="Holden W.T."/>
            <person name="Surmeier D.J."/>
        </authorList>
    </citation>
    <scope>INTERACTION WITH PATJ</scope>
</reference>
<reference key="6">
    <citation type="journal article" date="2012" name="Nat. Commun.">
        <title>Quantitative maps of protein phosphorylation sites across 14 different rat organs and tissues.</title>
        <authorList>
            <person name="Lundby A."/>
            <person name="Secher A."/>
            <person name="Lage K."/>
            <person name="Nordsborg N.B."/>
            <person name="Dmytriyev A."/>
            <person name="Lundby C."/>
            <person name="Olsen J.V."/>
        </authorList>
    </citation>
    <scope>PHOSPHORYLATION [LARGE SCALE ANALYSIS] AT SER-912</scope>
    <scope>IDENTIFICATION BY MASS SPECTROMETRY [LARGE SCALE ANALYSIS]</scope>
</reference>
<reference key="7">
    <citation type="journal article" date="2017" name="Mol. Pharmacol.">
        <title>Functional evaluation of a de novo GRIN2A mutation identified in a patient with profound global developmental delay and refractory epilepsy.</title>
        <authorList>
            <person name="Chen W."/>
            <person name="Tankovic A."/>
            <person name="Burger P.B."/>
            <person name="Kusumoto H."/>
            <person name="Traynelis S.F."/>
            <person name="Yuan H."/>
        </authorList>
    </citation>
    <scope>FUNCTION</scope>
    <scope>SUBCELLULAR LOCATION</scope>
    <scope>SUBUNIT</scope>
    <scope>MUTAGENESIS OF MET-815</scope>
</reference>
<reference key="8">
    <citation type="journal article" date="2017" name="PLoS Genet.">
        <title>Molecular mechanism of disease-associated mutations in the pre-M1 helix of NMDA receptors and potential rescue pharmacology.</title>
        <authorList>
            <person name="Ogden K.K."/>
            <person name="Chen W."/>
            <person name="Swanger S.A."/>
            <person name="McDaniel M.J."/>
            <person name="Fan L.Z."/>
            <person name="Hu C."/>
            <person name="Tankovic A."/>
            <person name="Kusumoto H."/>
            <person name="Kosobucki G.J."/>
            <person name="Schulien A.J."/>
            <person name="Su Z."/>
            <person name="Pecha J."/>
            <person name="Bhattacharya S."/>
            <person name="Petrovski S."/>
            <person name="Cohen A.E."/>
            <person name="Aizenman E."/>
            <person name="Traynelis S.F."/>
            <person name="Yuan H."/>
        </authorList>
    </citation>
    <scope>FUNCTION</scope>
    <scope>MUTAGENESIS OF PRO-550</scope>
</reference>
<reference evidence="23 24 25 26" key="9">
    <citation type="journal article" date="2023" name="Nat. Struct. Mol. Biol.">
        <title>Distinct structure and gating mechanism in diverse NMDA receptors with GluN2C and GluN2D subunits.</title>
        <authorList>
            <person name="Zhang J."/>
            <person name="Zhang M."/>
            <person name="Wang Q."/>
            <person name="Wen H."/>
            <person name="Liu Z."/>
            <person name="Wang F."/>
            <person name="Wang Y."/>
            <person name="Yao F."/>
            <person name="Song N."/>
            <person name="Kou Z."/>
            <person name="Li Y."/>
            <person name="Guo F."/>
            <person name="Zhu S."/>
        </authorList>
    </citation>
    <scope>STRUCTURE BY ELECTRON MICROSCOPY (3.00 ANGSTROMS) OF 1-800 IN COMPLEX WITH GLUTAMATE; GRIN1 AND GRIN2A</scope>
    <scope>DISULFIDE BONDS</scope>
    <scope>SUBUNIT</scope>
    <scope>TOPOLOGY</scope>
</reference>
<evidence type="ECO:0000250" key="1"/>
<evidence type="ECO:0000250" key="2">
    <source>
        <dbReference type="UniProtKB" id="P35438"/>
    </source>
</evidence>
<evidence type="ECO:0000250" key="3">
    <source>
        <dbReference type="UniProtKB" id="Q00960"/>
    </source>
</evidence>
<evidence type="ECO:0000250" key="4">
    <source>
        <dbReference type="UniProtKB" id="Q01098"/>
    </source>
</evidence>
<evidence type="ECO:0000250" key="5">
    <source>
        <dbReference type="UniProtKB" id="Q14957"/>
    </source>
</evidence>
<evidence type="ECO:0000255" key="6"/>
<evidence type="ECO:0000256" key="7">
    <source>
        <dbReference type="SAM" id="MobiDB-lite"/>
    </source>
</evidence>
<evidence type="ECO:0000269" key="8">
    <source>
    </source>
</evidence>
<evidence type="ECO:0000269" key="9">
    <source>
    </source>
</evidence>
<evidence type="ECO:0000269" key="10">
    <source>
    </source>
</evidence>
<evidence type="ECO:0000269" key="11">
    <source>
    </source>
</evidence>
<evidence type="ECO:0000269" key="12">
    <source>
    </source>
</evidence>
<evidence type="ECO:0000269" key="13">
    <source>
    </source>
</evidence>
<evidence type="ECO:0000269" key="14">
    <source>
    </source>
</evidence>
<evidence type="ECO:0000269" key="15">
    <source>
    </source>
</evidence>
<evidence type="ECO:0000303" key="16">
    <source>
    </source>
</evidence>
<evidence type="ECO:0000303" key="17">
    <source>
    </source>
</evidence>
<evidence type="ECO:0000303" key="18">
    <source>
    </source>
</evidence>
<evidence type="ECO:0000305" key="19"/>
<evidence type="ECO:0000305" key="20">
    <source>
    </source>
</evidence>
<evidence type="ECO:0000312" key="21">
    <source>
        <dbReference type="PDB" id="7YFI"/>
    </source>
</evidence>
<evidence type="ECO:0000312" key="22">
    <source>
        <dbReference type="RGD" id="2739"/>
    </source>
</evidence>
<evidence type="ECO:0007744" key="23">
    <source>
        <dbReference type="PDB" id="7YFG"/>
    </source>
</evidence>
<evidence type="ECO:0007744" key="24">
    <source>
        <dbReference type="PDB" id="7YFH"/>
    </source>
</evidence>
<evidence type="ECO:0007744" key="25">
    <source>
        <dbReference type="PDB" id="7YFI"/>
    </source>
</evidence>
<evidence type="ECO:0007744" key="26">
    <source>
        <dbReference type="PDB" id="8HDK"/>
    </source>
</evidence>
<evidence type="ECO:0007744" key="27">
    <source>
    </source>
</evidence>
<evidence type="ECO:0007829" key="28">
    <source>
        <dbReference type="PDB" id="7YFH"/>
    </source>
</evidence>
<evidence type="ECO:0007829" key="29">
    <source>
        <dbReference type="PDB" id="7YFI"/>
    </source>
</evidence>
<accession>Q00961</accession>
<comment type="function">
    <text evidence="2 4 8 9 10 13 14">Component of N-methyl-D-aspartate (NMDA) receptors (NMDARs) that function as heterotetrameric, ligand-gated cation channels with high calcium permeability and voltage-dependent block by Mg(2+) (PubMed:1350383, PubMed:8428958). Participates in synaptic plasticity for learning and memory formation by contributing to the slow phase of excitatory postsynaptic current and long-term synaptic potentiation (By similarity). Channel activation requires binding of the neurotransmitter L-glutamate to the GluN2 subunit, glycine or D-serine binding to the GluN1 subunit, plus membrane depolarization to eliminate channel inhibition by Mg(2+) (PubMed:1350383, PubMed:28095420, PubMed:28126851, PubMed:8428958). NMDARs mediate simultaneously the potasium efflux and the influx of calcium and sodium (By similarity). Each GluN2 subunit confers differential attributes to channel properties, including activation, deactivation and desensitization kinetics, pH sensitivity, Ca2(+) permeability, and binding to allosteric modulators (PubMed:1350383, PubMed:8428958, PubMed:9463421).</text>
</comment>
<comment type="catalytic activity">
    <reaction evidence="8 13">
        <text>Ca(2+)(in) = Ca(2+)(out)</text>
        <dbReference type="Rhea" id="RHEA:29671"/>
        <dbReference type="ChEBI" id="CHEBI:29108"/>
    </reaction>
</comment>
<comment type="catalytic activity">
    <reaction evidence="8">
        <text>Na(+)(in) = Na(+)(out)</text>
        <dbReference type="Rhea" id="RHEA:34963"/>
        <dbReference type="ChEBI" id="CHEBI:29101"/>
    </reaction>
</comment>
<comment type="catalytic activity">
    <reaction evidence="2">
        <text>K(+)(in) = K(+)(out)</text>
        <dbReference type="Rhea" id="RHEA:29463"/>
        <dbReference type="ChEBI" id="CHEBI:29103"/>
    </reaction>
</comment>
<comment type="subunit">
    <text evidence="5 8 10 11 12 13 15 19">Heterotetramer (PubMed:36959261). Forms heterotetrameric channels composed of two GluN1/zeta subunits (GRIN1), and two identical GluN2/epsilon subunits (GRIN2A, GRIN2B, GRIN2C or GRIN2D) or GluN3 subunits (GRIN3A or GRIN3B) (in vitro) (PubMed:1350383, PubMed:28126851, PubMed:36959261, PubMed:8428958). In vivo, the subunit composition may depend on the expression levels of the different subunits (Probable). Interacts with PDZ domains of PATJ and DLG4 (PubMed:7569905, PubMed:9647694). Interacts (via PDZ-binding motif) with SNX27 (via PDZ domain); the interaction is required for recycling to the plasma membrane when endocytosed and prevent degradation in lysosomes (By similarity).</text>
</comment>
<comment type="interaction">
    <interactant intactId="EBI-631045">
        <id>Q00961</id>
    </interactant>
    <interactant intactId="EBI-8366894">
        <id>Q63ZW7</id>
        <label>Patj</label>
    </interactant>
    <organismsDiffer>true</organismsDiffer>
    <experiments>2</experiments>
</comment>
<comment type="subcellular location">
    <subcellularLocation>
        <location evidence="8 10 13">Cell membrane</location>
        <topology evidence="5">Multi-pass membrane protein</topology>
    </subcellularLocation>
    <subcellularLocation>
        <location evidence="5">Postsynaptic cell membrane</location>
        <topology evidence="5">Multi-pass membrane protein</topology>
    </subcellularLocation>
</comment>
<comment type="tissue specificity">
    <text evidence="8 13">Detected in cerebellum.</text>
</comment>
<comment type="domain">
    <text evidence="3">A hydrophobic region that gives rise to the prediction of a transmembrane span does not cross the membrane, but is part of a discontinuously helical region that dips into the membrane and is probably part of the pore and of the selectivity filter.</text>
</comment>
<comment type="similarity">
    <text evidence="19">Belongs to the glutamate-gated ion channel (TC 1.A.10.1) family. NR2C/GRIN2C subfamily.</text>
</comment>
<comment type="sequence caution" evidence="19">
    <conflict type="erroneous initiation">
        <sequence resource="EMBL-CDS" id="BAA02499"/>
    </conflict>
</comment>